<reference key="1">
    <citation type="submission" date="2007-09" db="EMBL/GenBank/DDBJ databases">
        <title>Complete sequence of chromosome of Serratia proteamaculans 568.</title>
        <authorList>
            <consortium name="US DOE Joint Genome Institute"/>
            <person name="Copeland A."/>
            <person name="Lucas S."/>
            <person name="Lapidus A."/>
            <person name="Barry K."/>
            <person name="Glavina del Rio T."/>
            <person name="Dalin E."/>
            <person name="Tice H."/>
            <person name="Pitluck S."/>
            <person name="Chain P."/>
            <person name="Malfatti S."/>
            <person name="Shin M."/>
            <person name="Vergez L."/>
            <person name="Schmutz J."/>
            <person name="Larimer F."/>
            <person name="Land M."/>
            <person name="Hauser L."/>
            <person name="Kyrpides N."/>
            <person name="Kim E."/>
            <person name="Taghavi S."/>
            <person name="Newman L."/>
            <person name="Vangronsveld J."/>
            <person name="van der Lelie D."/>
            <person name="Richardson P."/>
        </authorList>
    </citation>
    <scope>NUCLEOTIDE SEQUENCE [LARGE SCALE GENOMIC DNA]</scope>
    <source>
        <strain>568</strain>
    </source>
</reference>
<name>RBFA_SERP5</name>
<accession>A8G908</accession>
<proteinExistence type="inferred from homology"/>
<organism>
    <name type="scientific">Serratia proteamaculans (strain 568)</name>
    <dbReference type="NCBI Taxonomy" id="399741"/>
    <lineage>
        <taxon>Bacteria</taxon>
        <taxon>Pseudomonadati</taxon>
        <taxon>Pseudomonadota</taxon>
        <taxon>Gammaproteobacteria</taxon>
        <taxon>Enterobacterales</taxon>
        <taxon>Yersiniaceae</taxon>
        <taxon>Serratia</taxon>
    </lineage>
</organism>
<comment type="function">
    <text evidence="1">One of several proteins that assist in the late maturation steps of the functional core of the 30S ribosomal subunit. Associates with free 30S ribosomal subunits (but not with 30S subunits that are part of 70S ribosomes or polysomes). Required for efficient processing of 16S rRNA. May interact with the 5'-terminal helix region of 16S rRNA.</text>
</comment>
<comment type="subunit">
    <text evidence="1">Monomer. Binds 30S ribosomal subunits, but not 50S ribosomal subunits or 70S ribosomes.</text>
</comment>
<comment type="subcellular location">
    <subcellularLocation>
        <location evidence="1">Cytoplasm</location>
    </subcellularLocation>
</comment>
<comment type="similarity">
    <text evidence="1">Belongs to the RbfA family.</text>
</comment>
<keyword id="KW-0963">Cytoplasm</keyword>
<keyword id="KW-0690">Ribosome biogenesis</keyword>
<protein>
    <recommendedName>
        <fullName evidence="1">Ribosome-binding factor A</fullName>
    </recommendedName>
</protein>
<sequence length="136" mass="15063">MAKEFSRGQRVAQEMQKEIAIILQREVKDPRVGMATVSGVEVSRDLAYAKVYVTFLNVLTENADPNLVPNGIKALEDASGYIRTLLGKAMRLRVVPELTFAYDNSLVEGMRMSNLVTNVVKNDAERRSASGDDEEA</sequence>
<evidence type="ECO:0000255" key="1">
    <source>
        <dbReference type="HAMAP-Rule" id="MF_00003"/>
    </source>
</evidence>
<gene>
    <name evidence="1" type="primary">rbfA</name>
    <name type="ordered locus">Spro_0490</name>
</gene>
<dbReference type="EMBL" id="CP000826">
    <property type="protein sequence ID" value="ABV39598.1"/>
    <property type="molecule type" value="Genomic_DNA"/>
</dbReference>
<dbReference type="SMR" id="A8G908"/>
<dbReference type="STRING" id="399741.Spro_0490"/>
<dbReference type="KEGG" id="spe:Spro_0490"/>
<dbReference type="eggNOG" id="COG0858">
    <property type="taxonomic scope" value="Bacteria"/>
</dbReference>
<dbReference type="HOGENOM" id="CLU_089475_5_0_6"/>
<dbReference type="OrthoDB" id="307788at2"/>
<dbReference type="GO" id="GO:0005829">
    <property type="term" value="C:cytosol"/>
    <property type="evidence" value="ECO:0007669"/>
    <property type="project" value="TreeGrafter"/>
</dbReference>
<dbReference type="GO" id="GO:0043024">
    <property type="term" value="F:ribosomal small subunit binding"/>
    <property type="evidence" value="ECO:0007669"/>
    <property type="project" value="TreeGrafter"/>
</dbReference>
<dbReference type="GO" id="GO:0030490">
    <property type="term" value="P:maturation of SSU-rRNA"/>
    <property type="evidence" value="ECO:0007669"/>
    <property type="project" value="UniProtKB-UniRule"/>
</dbReference>
<dbReference type="FunFam" id="3.30.300.20:FF:000007">
    <property type="entry name" value="Ribosome-binding factor A"/>
    <property type="match status" value="1"/>
</dbReference>
<dbReference type="Gene3D" id="3.30.300.20">
    <property type="match status" value="1"/>
</dbReference>
<dbReference type="HAMAP" id="MF_00003">
    <property type="entry name" value="RbfA"/>
    <property type="match status" value="1"/>
</dbReference>
<dbReference type="InterPro" id="IPR015946">
    <property type="entry name" value="KH_dom-like_a/b"/>
</dbReference>
<dbReference type="InterPro" id="IPR000238">
    <property type="entry name" value="RbfA"/>
</dbReference>
<dbReference type="InterPro" id="IPR023799">
    <property type="entry name" value="RbfA_dom_sf"/>
</dbReference>
<dbReference type="InterPro" id="IPR020053">
    <property type="entry name" value="Ribosome-bd_factorA_CS"/>
</dbReference>
<dbReference type="NCBIfam" id="TIGR00082">
    <property type="entry name" value="rbfA"/>
    <property type="match status" value="1"/>
</dbReference>
<dbReference type="PANTHER" id="PTHR33515">
    <property type="entry name" value="RIBOSOME-BINDING FACTOR A, CHLOROPLASTIC-RELATED"/>
    <property type="match status" value="1"/>
</dbReference>
<dbReference type="PANTHER" id="PTHR33515:SF1">
    <property type="entry name" value="RIBOSOME-BINDING FACTOR A, CHLOROPLASTIC-RELATED"/>
    <property type="match status" value="1"/>
</dbReference>
<dbReference type="Pfam" id="PF02033">
    <property type="entry name" value="RBFA"/>
    <property type="match status" value="1"/>
</dbReference>
<dbReference type="SUPFAM" id="SSF89919">
    <property type="entry name" value="Ribosome-binding factor A, RbfA"/>
    <property type="match status" value="1"/>
</dbReference>
<dbReference type="PROSITE" id="PS01319">
    <property type="entry name" value="RBFA"/>
    <property type="match status" value="1"/>
</dbReference>
<feature type="chain" id="PRO_1000057024" description="Ribosome-binding factor A">
    <location>
        <begin position="1"/>
        <end position="136"/>
    </location>
</feature>